<gene>
    <name evidence="1" type="primary">thrB</name>
    <name type="ordered locus">HDEF_1899</name>
</gene>
<evidence type="ECO:0000255" key="1">
    <source>
        <dbReference type="HAMAP-Rule" id="MF_00384"/>
    </source>
</evidence>
<dbReference type="EC" id="2.7.1.39" evidence="1"/>
<dbReference type="EMBL" id="CP001277">
    <property type="protein sequence ID" value="ACQ68489.1"/>
    <property type="molecule type" value="Genomic_DNA"/>
</dbReference>
<dbReference type="RefSeq" id="WP_015874253.1">
    <property type="nucleotide sequence ID" value="NC_012751.1"/>
</dbReference>
<dbReference type="SMR" id="C4K7E6"/>
<dbReference type="STRING" id="572265.HDEF_1899"/>
<dbReference type="GeneID" id="66262114"/>
<dbReference type="KEGG" id="hde:HDEF_1899"/>
<dbReference type="eggNOG" id="COG0083">
    <property type="taxonomic scope" value="Bacteria"/>
</dbReference>
<dbReference type="HOGENOM" id="CLU_041243_1_1_6"/>
<dbReference type="UniPathway" id="UPA00050">
    <property type="reaction ID" value="UER00064"/>
</dbReference>
<dbReference type="Proteomes" id="UP000002334">
    <property type="component" value="Chromosome"/>
</dbReference>
<dbReference type="GO" id="GO:0005737">
    <property type="term" value="C:cytoplasm"/>
    <property type="evidence" value="ECO:0007669"/>
    <property type="project" value="UniProtKB-SubCell"/>
</dbReference>
<dbReference type="GO" id="GO:0005524">
    <property type="term" value="F:ATP binding"/>
    <property type="evidence" value="ECO:0007669"/>
    <property type="project" value="UniProtKB-UniRule"/>
</dbReference>
<dbReference type="GO" id="GO:0004413">
    <property type="term" value="F:homoserine kinase activity"/>
    <property type="evidence" value="ECO:0007669"/>
    <property type="project" value="UniProtKB-UniRule"/>
</dbReference>
<dbReference type="GO" id="GO:0009088">
    <property type="term" value="P:threonine biosynthetic process"/>
    <property type="evidence" value="ECO:0007669"/>
    <property type="project" value="UniProtKB-UniRule"/>
</dbReference>
<dbReference type="Gene3D" id="3.30.230.10">
    <property type="match status" value="1"/>
</dbReference>
<dbReference type="Gene3D" id="3.30.70.890">
    <property type="entry name" value="GHMP kinase, C-terminal domain"/>
    <property type="match status" value="1"/>
</dbReference>
<dbReference type="HAMAP" id="MF_00384">
    <property type="entry name" value="Homoser_kinase"/>
    <property type="match status" value="1"/>
</dbReference>
<dbReference type="InterPro" id="IPR013750">
    <property type="entry name" value="GHMP_kinase_C_dom"/>
</dbReference>
<dbReference type="InterPro" id="IPR036554">
    <property type="entry name" value="GHMP_kinase_C_sf"/>
</dbReference>
<dbReference type="InterPro" id="IPR006204">
    <property type="entry name" value="GHMP_kinase_N_dom"/>
</dbReference>
<dbReference type="InterPro" id="IPR006203">
    <property type="entry name" value="GHMP_knse_ATP-bd_CS"/>
</dbReference>
<dbReference type="InterPro" id="IPR000870">
    <property type="entry name" value="Homoserine_kinase"/>
</dbReference>
<dbReference type="InterPro" id="IPR020568">
    <property type="entry name" value="Ribosomal_Su5_D2-typ_SF"/>
</dbReference>
<dbReference type="InterPro" id="IPR014721">
    <property type="entry name" value="Ribsml_uS5_D2-typ_fold_subgr"/>
</dbReference>
<dbReference type="NCBIfam" id="NF002288">
    <property type="entry name" value="PRK01212.1-4"/>
    <property type="match status" value="1"/>
</dbReference>
<dbReference type="NCBIfam" id="TIGR00191">
    <property type="entry name" value="thrB"/>
    <property type="match status" value="1"/>
</dbReference>
<dbReference type="PANTHER" id="PTHR20861:SF1">
    <property type="entry name" value="HOMOSERINE KINASE"/>
    <property type="match status" value="1"/>
</dbReference>
<dbReference type="PANTHER" id="PTHR20861">
    <property type="entry name" value="HOMOSERINE/4-DIPHOSPHOCYTIDYL-2-C-METHYL-D-ERYTHRITOL KINASE"/>
    <property type="match status" value="1"/>
</dbReference>
<dbReference type="Pfam" id="PF08544">
    <property type="entry name" value="GHMP_kinases_C"/>
    <property type="match status" value="1"/>
</dbReference>
<dbReference type="Pfam" id="PF00288">
    <property type="entry name" value="GHMP_kinases_N"/>
    <property type="match status" value="1"/>
</dbReference>
<dbReference type="PIRSF" id="PIRSF000676">
    <property type="entry name" value="Homoser_kin"/>
    <property type="match status" value="1"/>
</dbReference>
<dbReference type="PRINTS" id="PR00958">
    <property type="entry name" value="HOMSERKINASE"/>
</dbReference>
<dbReference type="SUPFAM" id="SSF55060">
    <property type="entry name" value="GHMP Kinase, C-terminal domain"/>
    <property type="match status" value="1"/>
</dbReference>
<dbReference type="SUPFAM" id="SSF54211">
    <property type="entry name" value="Ribosomal protein S5 domain 2-like"/>
    <property type="match status" value="1"/>
</dbReference>
<dbReference type="PROSITE" id="PS00627">
    <property type="entry name" value="GHMP_KINASES_ATP"/>
    <property type="match status" value="1"/>
</dbReference>
<sequence length="309" mass="33585">MLKFFAPASIGNLGVGFDVLGMAISPIDGTLLGDCLSIAPAEQFDLEIKGSFSDKLPKEPKKNIVFRCWKNFCQKIGKDVPVQMRLEKNMPVGSGLGSSACSVVAALVAMNEYCAHPLDQNALLSLMGEMEGLISGNVHYDNVAPCYLGGLQFILDTQSRISQSIPLFSDWLWVLAYPGIKISTAKARNVLPVHYSKRDCVDHGRYLAGFIHACYSQQPDLAAELMKDVIAEPYRLPMLPSFLTARQKAKEMGALATGISGSGPTLFSVCPNLKTATSISDWLQHHYLENDAGFVHICRLDSLGARSVG</sequence>
<protein>
    <recommendedName>
        <fullName evidence="1">Homoserine kinase</fullName>
        <shortName evidence="1">HK</shortName>
        <shortName evidence="1">HSK</shortName>
        <ecNumber evidence="1">2.7.1.39</ecNumber>
    </recommendedName>
</protein>
<reference key="1">
    <citation type="journal article" date="2009" name="Proc. Natl. Acad. Sci. U.S.A.">
        <title>Hamiltonella defensa, genome evolution of protective bacterial endosymbiont from pathogenic ancestors.</title>
        <authorList>
            <person name="Degnan P.H."/>
            <person name="Yu Y."/>
            <person name="Sisneros N."/>
            <person name="Wing R.A."/>
            <person name="Moran N.A."/>
        </authorList>
    </citation>
    <scope>NUCLEOTIDE SEQUENCE [LARGE SCALE GENOMIC DNA]</scope>
    <source>
        <strain>5AT</strain>
    </source>
</reference>
<feature type="chain" id="PRO_1000205735" description="Homoserine kinase">
    <location>
        <begin position="1"/>
        <end position="309"/>
    </location>
</feature>
<feature type="binding site" evidence="1">
    <location>
        <begin position="91"/>
        <end position="101"/>
    </location>
    <ligand>
        <name>ATP</name>
        <dbReference type="ChEBI" id="CHEBI:30616"/>
    </ligand>
</feature>
<proteinExistence type="inferred from homology"/>
<name>KHSE_HAMD5</name>
<organism>
    <name type="scientific">Hamiltonella defensa subsp. Acyrthosiphon pisum (strain 5AT)</name>
    <dbReference type="NCBI Taxonomy" id="572265"/>
    <lineage>
        <taxon>Bacteria</taxon>
        <taxon>Pseudomonadati</taxon>
        <taxon>Pseudomonadota</taxon>
        <taxon>Gammaproteobacteria</taxon>
        <taxon>Enterobacterales</taxon>
        <taxon>Enterobacteriaceae</taxon>
        <taxon>aphid secondary symbionts</taxon>
        <taxon>Candidatus Hamiltonella</taxon>
    </lineage>
</organism>
<accession>C4K7E6</accession>
<keyword id="KW-0028">Amino-acid biosynthesis</keyword>
<keyword id="KW-0067">ATP-binding</keyword>
<keyword id="KW-0963">Cytoplasm</keyword>
<keyword id="KW-0418">Kinase</keyword>
<keyword id="KW-0547">Nucleotide-binding</keyword>
<keyword id="KW-0791">Threonine biosynthesis</keyword>
<keyword id="KW-0808">Transferase</keyword>
<comment type="function">
    <text evidence="1">Catalyzes the ATP-dependent phosphorylation of L-homoserine to L-homoserine phosphate.</text>
</comment>
<comment type="catalytic activity">
    <reaction evidence="1">
        <text>L-homoserine + ATP = O-phospho-L-homoserine + ADP + H(+)</text>
        <dbReference type="Rhea" id="RHEA:13985"/>
        <dbReference type="ChEBI" id="CHEBI:15378"/>
        <dbReference type="ChEBI" id="CHEBI:30616"/>
        <dbReference type="ChEBI" id="CHEBI:57476"/>
        <dbReference type="ChEBI" id="CHEBI:57590"/>
        <dbReference type="ChEBI" id="CHEBI:456216"/>
        <dbReference type="EC" id="2.7.1.39"/>
    </reaction>
</comment>
<comment type="pathway">
    <text evidence="1">Amino-acid biosynthesis; L-threonine biosynthesis; L-threonine from L-aspartate: step 4/5.</text>
</comment>
<comment type="subcellular location">
    <subcellularLocation>
        <location evidence="1">Cytoplasm</location>
    </subcellularLocation>
</comment>
<comment type="similarity">
    <text evidence="1">Belongs to the GHMP kinase family. Homoserine kinase subfamily.</text>
</comment>